<gene>
    <name evidence="1" type="primary">gatC</name>
    <name type="ordered locus">Rru_A3177</name>
</gene>
<name>GATC_RHORT</name>
<proteinExistence type="inferred from homology"/>
<feature type="chain" id="PRO_1000016196" description="Aspartyl/glutamyl-tRNA(Asn/Gln) amidotransferase subunit C">
    <location>
        <begin position="1"/>
        <end position="95"/>
    </location>
</feature>
<accession>Q2RPH3</accession>
<sequence>MALDKTTVAKIATLARLDIEEDRMEALAGELSGILDWIEQLAEVDTSGVAAMTSVADLALAWREDAVTDGGYADRVLANAPESQDGCFLVPKVVE</sequence>
<reference key="1">
    <citation type="journal article" date="2011" name="Stand. Genomic Sci.">
        <title>Complete genome sequence of Rhodospirillum rubrum type strain (S1).</title>
        <authorList>
            <person name="Munk A.C."/>
            <person name="Copeland A."/>
            <person name="Lucas S."/>
            <person name="Lapidus A."/>
            <person name="Del Rio T.G."/>
            <person name="Barry K."/>
            <person name="Detter J.C."/>
            <person name="Hammon N."/>
            <person name="Israni S."/>
            <person name="Pitluck S."/>
            <person name="Brettin T."/>
            <person name="Bruce D."/>
            <person name="Han C."/>
            <person name="Tapia R."/>
            <person name="Gilna P."/>
            <person name="Schmutz J."/>
            <person name="Larimer F."/>
            <person name="Land M."/>
            <person name="Kyrpides N.C."/>
            <person name="Mavromatis K."/>
            <person name="Richardson P."/>
            <person name="Rohde M."/>
            <person name="Goeker M."/>
            <person name="Klenk H.P."/>
            <person name="Zhang Y."/>
            <person name="Roberts G.P."/>
            <person name="Reslewic S."/>
            <person name="Schwartz D.C."/>
        </authorList>
    </citation>
    <scope>NUCLEOTIDE SEQUENCE [LARGE SCALE GENOMIC DNA]</scope>
    <source>
        <strain>ATCC 11170 / ATH 1.1.1 / DSM 467 / LMG 4362 / NCIMB 8255 / S1</strain>
    </source>
</reference>
<organism>
    <name type="scientific">Rhodospirillum rubrum (strain ATCC 11170 / ATH 1.1.1 / DSM 467 / LMG 4362 / NCIMB 8255 / S1)</name>
    <dbReference type="NCBI Taxonomy" id="269796"/>
    <lineage>
        <taxon>Bacteria</taxon>
        <taxon>Pseudomonadati</taxon>
        <taxon>Pseudomonadota</taxon>
        <taxon>Alphaproteobacteria</taxon>
        <taxon>Rhodospirillales</taxon>
        <taxon>Rhodospirillaceae</taxon>
        <taxon>Rhodospirillum</taxon>
    </lineage>
</organism>
<protein>
    <recommendedName>
        <fullName evidence="1">Aspartyl/glutamyl-tRNA(Asn/Gln) amidotransferase subunit C</fullName>
        <shortName evidence="1">Asp/Glu-ADT subunit C</shortName>
        <ecNumber evidence="1">6.3.5.-</ecNumber>
    </recommendedName>
</protein>
<keyword id="KW-0067">ATP-binding</keyword>
<keyword id="KW-0436">Ligase</keyword>
<keyword id="KW-0547">Nucleotide-binding</keyword>
<keyword id="KW-0648">Protein biosynthesis</keyword>
<keyword id="KW-1185">Reference proteome</keyword>
<comment type="function">
    <text evidence="1">Allows the formation of correctly charged Asn-tRNA(Asn) or Gln-tRNA(Gln) through the transamidation of misacylated Asp-tRNA(Asn) or Glu-tRNA(Gln) in organisms which lack either or both of asparaginyl-tRNA or glutaminyl-tRNA synthetases. The reaction takes place in the presence of glutamine and ATP through an activated phospho-Asp-tRNA(Asn) or phospho-Glu-tRNA(Gln).</text>
</comment>
<comment type="catalytic activity">
    <reaction evidence="1">
        <text>L-glutamyl-tRNA(Gln) + L-glutamine + ATP + H2O = L-glutaminyl-tRNA(Gln) + L-glutamate + ADP + phosphate + H(+)</text>
        <dbReference type="Rhea" id="RHEA:17521"/>
        <dbReference type="Rhea" id="RHEA-COMP:9681"/>
        <dbReference type="Rhea" id="RHEA-COMP:9684"/>
        <dbReference type="ChEBI" id="CHEBI:15377"/>
        <dbReference type="ChEBI" id="CHEBI:15378"/>
        <dbReference type="ChEBI" id="CHEBI:29985"/>
        <dbReference type="ChEBI" id="CHEBI:30616"/>
        <dbReference type="ChEBI" id="CHEBI:43474"/>
        <dbReference type="ChEBI" id="CHEBI:58359"/>
        <dbReference type="ChEBI" id="CHEBI:78520"/>
        <dbReference type="ChEBI" id="CHEBI:78521"/>
        <dbReference type="ChEBI" id="CHEBI:456216"/>
    </reaction>
</comment>
<comment type="catalytic activity">
    <reaction evidence="1">
        <text>L-aspartyl-tRNA(Asn) + L-glutamine + ATP + H2O = L-asparaginyl-tRNA(Asn) + L-glutamate + ADP + phosphate + 2 H(+)</text>
        <dbReference type="Rhea" id="RHEA:14513"/>
        <dbReference type="Rhea" id="RHEA-COMP:9674"/>
        <dbReference type="Rhea" id="RHEA-COMP:9677"/>
        <dbReference type="ChEBI" id="CHEBI:15377"/>
        <dbReference type="ChEBI" id="CHEBI:15378"/>
        <dbReference type="ChEBI" id="CHEBI:29985"/>
        <dbReference type="ChEBI" id="CHEBI:30616"/>
        <dbReference type="ChEBI" id="CHEBI:43474"/>
        <dbReference type="ChEBI" id="CHEBI:58359"/>
        <dbReference type="ChEBI" id="CHEBI:78515"/>
        <dbReference type="ChEBI" id="CHEBI:78516"/>
        <dbReference type="ChEBI" id="CHEBI:456216"/>
    </reaction>
</comment>
<comment type="subunit">
    <text evidence="1">Heterotrimer of A, B and C subunits.</text>
</comment>
<comment type="similarity">
    <text evidence="1">Belongs to the GatC family.</text>
</comment>
<evidence type="ECO:0000255" key="1">
    <source>
        <dbReference type="HAMAP-Rule" id="MF_00122"/>
    </source>
</evidence>
<dbReference type="EC" id="6.3.5.-" evidence="1"/>
<dbReference type="EMBL" id="CP000230">
    <property type="protein sequence ID" value="ABC23972.1"/>
    <property type="molecule type" value="Genomic_DNA"/>
</dbReference>
<dbReference type="RefSeq" id="WP_011390925.1">
    <property type="nucleotide sequence ID" value="NC_007643.1"/>
</dbReference>
<dbReference type="RefSeq" id="YP_428259.1">
    <property type="nucleotide sequence ID" value="NC_007643.1"/>
</dbReference>
<dbReference type="SMR" id="Q2RPH3"/>
<dbReference type="STRING" id="269796.Rru_A3177"/>
<dbReference type="EnsemblBacteria" id="ABC23972">
    <property type="protein sequence ID" value="ABC23972"/>
    <property type="gene ID" value="Rru_A3177"/>
</dbReference>
<dbReference type="KEGG" id="rru:Rru_A3177"/>
<dbReference type="PATRIC" id="fig|269796.9.peg.3290"/>
<dbReference type="eggNOG" id="COG0721">
    <property type="taxonomic scope" value="Bacteria"/>
</dbReference>
<dbReference type="HOGENOM" id="CLU_105899_2_0_5"/>
<dbReference type="PhylomeDB" id="Q2RPH3"/>
<dbReference type="Proteomes" id="UP000001929">
    <property type="component" value="Chromosome"/>
</dbReference>
<dbReference type="GO" id="GO:0050566">
    <property type="term" value="F:asparaginyl-tRNA synthase (glutamine-hydrolyzing) activity"/>
    <property type="evidence" value="ECO:0007669"/>
    <property type="project" value="RHEA"/>
</dbReference>
<dbReference type="GO" id="GO:0005524">
    <property type="term" value="F:ATP binding"/>
    <property type="evidence" value="ECO:0007669"/>
    <property type="project" value="UniProtKB-KW"/>
</dbReference>
<dbReference type="GO" id="GO:0050567">
    <property type="term" value="F:glutaminyl-tRNA synthase (glutamine-hydrolyzing) activity"/>
    <property type="evidence" value="ECO:0007669"/>
    <property type="project" value="UniProtKB-UniRule"/>
</dbReference>
<dbReference type="GO" id="GO:0070681">
    <property type="term" value="P:glutaminyl-tRNAGln biosynthesis via transamidation"/>
    <property type="evidence" value="ECO:0007669"/>
    <property type="project" value="TreeGrafter"/>
</dbReference>
<dbReference type="GO" id="GO:0006450">
    <property type="term" value="P:regulation of translational fidelity"/>
    <property type="evidence" value="ECO:0007669"/>
    <property type="project" value="InterPro"/>
</dbReference>
<dbReference type="GO" id="GO:0006412">
    <property type="term" value="P:translation"/>
    <property type="evidence" value="ECO:0007669"/>
    <property type="project" value="UniProtKB-UniRule"/>
</dbReference>
<dbReference type="Gene3D" id="1.10.20.60">
    <property type="entry name" value="Glu-tRNAGln amidotransferase C subunit, N-terminal domain"/>
    <property type="match status" value="1"/>
</dbReference>
<dbReference type="HAMAP" id="MF_00122">
    <property type="entry name" value="GatC"/>
    <property type="match status" value="1"/>
</dbReference>
<dbReference type="InterPro" id="IPR036113">
    <property type="entry name" value="Asp/Glu-ADT_sf_sub_c"/>
</dbReference>
<dbReference type="InterPro" id="IPR003837">
    <property type="entry name" value="GatC"/>
</dbReference>
<dbReference type="NCBIfam" id="TIGR00135">
    <property type="entry name" value="gatC"/>
    <property type="match status" value="1"/>
</dbReference>
<dbReference type="PANTHER" id="PTHR15004">
    <property type="entry name" value="GLUTAMYL-TRNA(GLN) AMIDOTRANSFERASE SUBUNIT C, MITOCHONDRIAL"/>
    <property type="match status" value="1"/>
</dbReference>
<dbReference type="PANTHER" id="PTHR15004:SF0">
    <property type="entry name" value="GLUTAMYL-TRNA(GLN) AMIDOTRANSFERASE SUBUNIT C, MITOCHONDRIAL"/>
    <property type="match status" value="1"/>
</dbReference>
<dbReference type="Pfam" id="PF02686">
    <property type="entry name" value="GatC"/>
    <property type="match status" value="1"/>
</dbReference>
<dbReference type="SUPFAM" id="SSF141000">
    <property type="entry name" value="Glu-tRNAGln amidotransferase C subunit"/>
    <property type="match status" value="1"/>
</dbReference>